<evidence type="ECO:0000250" key="1">
    <source>
        <dbReference type="UniProtKB" id="P18891"/>
    </source>
</evidence>
<evidence type="ECO:0000269" key="2">
    <source>
    </source>
</evidence>
<evidence type="ECO:0000303" key="3">
    <source>
    </source>
</evidence>
<evidence type="ECO:0000305" key="4"/>
<evidence type="ECO:0000305" key="5">
    <source>
    </source>
</evidence>
<proteinExistence type="inferred from homology"/>
<reference key="1">
    <citation type="journal article" date="2011" name="PLoS Pathog.">
        <title>Genomic and proteomic analyses of the fungus Arthrobotrys oligospora provide insights into nematode-trap formation.</title>
        <authorList>
            <person name="Yang J."/>
            <person name="Wang L."/>
            <person name="Ji X."/>
            <person name="Feng Y."/>
            <person name="Li X."/>
            <person name="Zou C."/>
            <person name="Xu J."/>
            <person name="Ren Y."/>
            <person name="Mi Q."/>
            <person name="Wu J."/>
            <person name="Liu S."/>
            <person name="Liu Y."/>
            <person name="Huang X."/>
            <person name="Wang H."/>
            <person name="Niu X."/>
            <person name="Li J."/>
            <person name="Liang L."/>
            <person name="Luo Y."/>
            <person name="Ji K."/>
            <person name="Zhou W."/>
            <person name="Yu Z."/>
            <person name="Li G."/>
            <person name="Liu Y."/>
            <person name="Li L."/>
            <person name="Qiao M."/>
            <person name="Feng L."/>
            <person name="Zhang K.-Q."/>
        </authorList>
    </citation>
    <scope>NUCLEOTIDE SEQUENCE [LARGE SCALE GENOMIC DNA]</scope>
    <source>
        <strain>ATCC 24927 / CBS 115.81 / DSM 1491</strain>
    </source>
</reference>
<reference key="2">
    <citation type="journal article" date="2022" name="FEMS Microbiol. Lett.">
        <title>The fucose-specific lectin gene AOL_s00054g276 affects trap formation and nematocidal activity of the nematophagous fungus Arthrobotrys oligospora.</title>
        <authorList>
            <person name="Si J."/>
            <person name="Dong X."/>
            <person name="Zhang G."/>
            <person name="Lu H."/>
            <person name="Tang K."/>
            <person name="Zhang L."/>
            <person name="Kong X."/>
            <person name="Sheng K."/>
            <person name="Wang J."/>
            <person name="Zha X."/>
            <person name="Wang Y."/>
        </authorList>
    </citation>
    <scope>FUNCTION</scope>
    <scope>DISRUPTION PHENOTYPE</scope>
</reference>
<name>G276_ARTOA</name>
<protein>
    <recommendedName>
        <fullName evidence="3">Fucose-specific lectin g276</fullName>
    </recommendedName>
</protein>
<organism>
    <name type="scientific">Arthrobotrys oligospora (strain ATCC 24927 / CBS 115.81 / DSM 1491)</name>
    <name type="common">Nematode-trapping fungus</name>
    <name type="synonym">Didymozoophaga oligospora</name>
    <dbReference type="NCBI Taxonomy" id="756982"/>
    <lineage>
        <taxon>Eukaryota</taxon>
        <taxon>Fungi</taxon>
        <taxon>Dikarya</taxon>
        <taxon>Ascomycota</taxon>
        <taxon>Pezizomycotina</taxon>
        <taxon>Orbiliomycetes</taxon>
        <taxon>Orbiliales</taxon>
        <taxon>Orbiliaceae</taxon>
        <taxon>Orbilia</taxon>
        <taxon>Orbilia oligospora</taxon>
    </lineage>
</organism>
<sequence>MPFEARDDNVDPDAIGNHYHDDGLLWQTHYAAVEVFDYPHATMHMKIFCQSYWGELHDLTFSYKRGSTKEPEEENAWETKFRQSLARPGTDEAAMMHTPLAAVVRYDTGNPTTHLFYISTGFKIREVIWKNGSQTNDCLGITVCPTSSLAVTKWGAGSQTHFRLYYQSKAGTIEEHCLDCNAGTWTKGATLSGPVSAYDDDSPLRGTSLSFINLAQDKPELRGYFQTAKGSIQEFTYKGTKWSTSKIGVDAAPFRTPLAAITVEKNKIAALYYVDAYNRINEVLWEGDWEGSERIDGESVAPGTRLAVASLKYIGHDKIHMFSSGLVNVITQRVWTRENGAWGDRPTIVDFEAPVQVEVEPGLDPAIHLTKPTRDGRRV</sequence>
<comment type="function">
    <text evidence="2 5">Lectin that specifically binds to L-fucose (PubMed:35142828). Is associated with the morphogenesis of the fungus, and plays a role in the formation of the constricting rings involved in nematode-trapping (PubMed:35142828).</text>
</comment>
<comment type="disruption phenotype">
    <text evidence="2">Delays trap formation and weakens nematocidal activity (PubMed:35142828). Does not affect mycelial growth, conidia production, conidial germination rates and adaption to environmental stresses (PubMed:35142828).</text>
</comment>
<comment type="similarity">
    <text evidence="4">Belongs to the fungal fucose-specific lectin family.</text>
</comment>
<feature type="chain" id="PRO_0000456236" description="Fucose-specific lectin g276">
    <location>
        <begin position="1"/>
        <end position="379"/>
    </location>
</feature>
<feature type="binding site" evidence="1">
    <location>
        <position position="126"/>
    </location>
    <ligand>
        <name>alpha-L-fucose</name>
        <dbReference type="ChEBI" id="CHEBI:42548"/>
        <label>1</label>
    </ligand>
</feature>
<feature type="binding site" evidence="1">
    <location>
        <position position="126"/>
    </location>
    <ligand>
        <name>beta-L-fucose</name>
        <dbReference type="ChEBI" id="CHEBI:42589"/>
        <label>1</label>
    </ligand>
</feature>
<feature type="binding site" evidence="1">
    <location>
        <position position="163"/>
    </location>
    <ligand>
        <name>beta-L-fucose</name>
        <dbReference type="ChEBI" id="CHEBI:42589"/>
        <label>2</label>
    </ligand>
</feature>
<feature type="binding site" evidence="1">
    <location>
        <position position="185"/>
    </location>
    <ligand>
        <name>alpha-L-fucose</name>
        <dbReference type="ChEBI" id="CHEBI:42548"/>
        <label>1</label>
    </ligand>
</feature>
<feature type="binding site" evidence="1">
    <location>
        <position position="185"/>
    </location>
    <ligand>
        <name>beta-L-fucose</name>
        <dbReference type="ChEBI" id="CHEBI:42589"/>
        <label>1</label>
    </ligand>
</feature>
<feature type="binding site" evidence="1">
    <location>
        <position position="222"/>
    </location>
    <ligand>
        <name>alpha-L-fucose</name>
        <dbReference type="ChEBI" id="CHEBI:42548"/>
        <label>2</label>
    </ligand>
</feature>
<feature type="binding site" evidence="1">
    <location>
        <position position="234"/>
    </location>
    <ligand>
        <name>alpha-L-fucose</name>
        <dbReference type="ChEBI" id="CHEBI:42548"/>
        <label>2</label>
    </ligand>
</feature>
<feature type="binding site" evidence="1">
    <location>
        <position position="242"/>
    </location>
    <ligand>
        <name>beta-L-fucose</name>
        <dbReference type="ChEBI" id="CHEBI:42589"/>
        <label>2</label>
    </ligand>
</feature>
<feature type="binding site" evidence="1">
    <location>
        <position position="282"/>
    </location>
    <ligand>
        <name>beta-L-fucose</name>
        <dbReference type="ChEBI" id="CHEBI:42589"/>
        <label>3</label>
    </ligand>
</feature>
<feature type="binding site" evidence="1">
    <location>
        <position position="289"/>
    </location>
    <ligand>
        <name>alpha-L-fucose</name>
        <dbReference type="ChEBI" id="CHEBI:42548"/>
        <label>2</label>
    </ligand>
</feature>
<dbReference type="EMBL" id="ADOT01000084">
    <property type="protein sequence ID" value="EGX51577.1"/>
    <property type="molecule type" value="Genomic_DNA"/>
</dbReference>
<dbReference type="RefSeq" id="XP_011119894.1">
    <property type="nucleotide sequence ID" value="XM_011121592.1"/>
</dbReference>
<dbReference type="SMR" id="G1X5Y2"/>
<dbReference type="GeneID" id="22890800"/>
<dbReference type="HOGENOM" id="CLU_729524_0_0_1"/>
<dbReference type="InParanoid" id="G1X5Y2"/>
<dbReference type="OrthoDB" id="1845078at4890"/>
<dbReference type="Proteomes" id="UP000008784">
    <property type="component" value="Unassembled WGS sequence"/>
</dbReference>
<dbReference type="Gene3D" id="2.120.10.70">
    <property type="entry name" value="Fucose-specific lectin"/>
    <property type="match status" value="1"/>
</dbReference>
<dbReference type="InterPro" id="IPR012475">
    <property type="entry name" value="Fungal_lectin"/>
</dbReference>
<dbReference type="Pfam" id="PF07938">
    <property type="entry name" value="Fungal_lectin"/>
    <property type="match status" value="1"/>
</dbReference>
<dbReference type="SUPFAM" id="SSF89372">
    <property type="entry name" value="Fucose-specific lectin"/>
    <property type="match status" value="2"/>
</dbReference>
<keyword id="KW-1185">Reference proteome</keyword>
<keyword id="KW-0843">Virulence</keyword>
<accession>G1X5Y2</accession>
<gene>
    <name type="ORF">AOL_s00054g276</name>
</gene>